<dbReference type="EMBL" id="CP000780">
    <property type="protein sequence ID" value="ABS55334.1"/>
    <property type="molecule type" value="Genomic_DNA"/>
</dbReference>
<dbReference type="RefSeq" id="WP_012106358.1">
    <property type="nucleotide sequence ID" value="NC_009712.1"/>
</dbReference>
<dbReference type="SMR" id="A7I6H3"/>
<dbReference type="STRING" id="456442.Mboo_0816"/>
<dbReference type="GeneID" id="5411495"/>
<dbReference type="KEGG" id="mbn:Mboo_0816"/>
<dbReference type="eggNOG" id="arCOG00497">
    <property type="taxonomic scope" value="Archaea"/>
</dbReference>
<dbReference type="HOGENOM" id="CLU_070010_4_0_2"/>
<dbReference type="OrthoDB" id="28313at2157"/>
<dbReference type="Proteomes" id="UP000002408">
    <property type="component" value="Chromosome"/>
</dbReference>
<dbReference type="GO" id="GO:0016787">
    <property type="term" value="F:hydrolase activity"/>
    <property type="evidence" value="ECO:0007669"/>
    <property type="project" value="UniProtKB-UniRule"/>
</dbReference>
<dbReference type="Gene3D" id="3.60.15.10">
    <property type="entry name" value="Ribonuclease Z/Hydroxyacylglutathione hydrolase-like"/>
    <property type="match status" value="1"/>
</dbReference>
<dbReference type="HAMAP" id="MF_00457">
    <property type="entry name" value="UPF0173"/>
    <property type="match status" value="1"/>
</dbReference>
<dbReference type="InterPro" id="IPR001279">
    <property type="entry name" value="Metallo-B-lactamas"/>
</dbReference>
<dbReference type="InterPro" id="IPR036866">
    <property type="entry name" value="RibonucZ/Hydroxyglut_hydro"/>
</dbReference>
<dbReference type="InterPro" id="IPR022877">
    <property type="entry name" value="UPF0173"/>
</dbReference>
<dbReference type="InterPro" id="IPR050114">
    <property type="entry name" value="UPF0173_UPF0282_UlaG_hydrolase"/>
</dbReference>
<dbReference type="NCBIfam" id="NF001911">
    <property type="entry name" value="PRK00685.1"/>
    <property type="match status" value="1"/>
</dbReference>
<dbReference type="PANTHER" id="PTHR43546:SF3">
    <property type="entry name" value="UPF0173 METAL-DEPENDENT HYDROLASE MJ1163"/>
    <property type="match status" value="1"/>
</dbReference>
<dbReference type="PANTHER" id="PTHR43546">
    <property type="entry name" value="UPF0173 METAL-DEPENDENT HYDROLASE MJ1163-RELATED"/>
    <property type="match status" value="1"/>
</dbReference>
<dbReference type="Pfam" id="PF13483">
    <property type="entry name" value="Lactamase_B_3"/>
    <property type="match status" value="1"/>
</dbReference>
<dbReference type="SMART" id="SM00849">
    <property type="entry name" value="Lactamase_B"/>
    <property type="match status" value="1"/>
</dbReference>
<dbReference type="SUPFAM" id="SSF56281">
    <property type="entry name" value="Metallo-hydrolase/oxidoreductase"/>
    <property type="match status" value="1"/>
</dbReference>
<keyword id="KW-0378">Hydrolase</keyword>
<keyword id="KW-1185">Reference proteome</keyword>
<sequence>MHLTWLGHACVLLTGTKKVLIDPFIPEGSVAGTDPDLVLVTHGHFDHMGEAVTLKKPTVAIGELARYLQAKGVPAEGMNIGGTIESGGIMVTMTPALHTSGIDDPAGAGCAGTAAGFVVRMDGVCVYHAGDTGLFSDMKLIGELYHPDVALLPIGGRYTMGTKEAMVAAQFIGAKTVIPIHYNTWEKIAADANGFKTAIERSTDLSVFLLGPGESMDIPPSR</sequence>
<gene>
    <name type="ordered locus">Mboo_0816</name>
</gene>
<accession>A7I6H3</accession>
<evidence type="ECO:0000255" key="1">
    <source>
        <dbReference type="HAMAP-Rule" id="MF_00457"/>
    </source>
</evidence>
<feature type="chain" id="PRO_0000367233" description="UPF0173 metal-dependent hydrolase Mboo_0816">
    <location>
        <begin position="1"/>
        <end position="222"/>
    </location>
</feature>
<proteinExistence type="inferred from homology"/>
<organism>
    <name type="scientific">Methanoregula boonei (strain DSM 21154 / JCM 14090 / 6A8)</name>
    <dbReference type="NCBI Taxonomy" id="456442"/>
    <lineage>
        <taxon>Archaea</taxon>
        <taxon>Methanobacteriati</taxon>
        <taxon>Methanobacteriota</taxon>
        <taxon>Stenosarchaea group</taxon>
        <taxon>Methanomicrobia</taxon>
        <taxon>Methanomicrobiales</taxon>
        <taxon>Methanoregulaceae</taxon>
        <taxon>Methanoregula</taxon>
    </lineage>
</organism>
<reference key="1">
    <citation type="journal article" date="2015" name="Microbiology">
        <title>Genome of Methanoregula boonei 6A8 reveals adaptations to oligotrophic peatland environments.</title>
        <authorList>
            <person name="Braeuer S."/>
            <person name="Cadillo-Quiroz H."/>
            <person name="Kyrpides N."/>
            <person name="Woyke T."/>
            <person name="Goodwin L."/>
            <person name="Detter C."/>
            <person name="Podell S."/>
            <person name="Yavitt J.B."/>
            <person name="Zinder S.H."/>
        </authorList>
    </citation>
    <scope>NUCLEOTIDE SEQUENCE [LARGE SCALE GENOMIC DNA]</scope>
    <source>
        <strain>DSM 21154 / JCM 14090 / 6A8</strain>
    </source>
</reference>
<name>Y816_METB6</name>
<comment type="similarity">
    <text evidence="1">Belongs to the UPF0173 family.</text>
</comment>
<protein>
    <recommendedName>
        <fullName evidence="1">UPF0173 metal-dependent hydrolase Mboo_0816</fullName>
    </recommendedName>
</protein>